<evidence type="ECO:0000255" key="1">
    <source>
        <dbReference type="HAMAP-Rule" id="MF_03123"/>
    </source>
</evidence>
<evidence type="ECO:0000255" key="2">
    <source>
        <dbReference type="PROSITE-ProRule" id="PRU01266"/>
    </source>
</evidence>
<evidence type="ECO:0000256" key="3">
    <source>
        <dbReference type="SAM" id="MobiDB-lite"/>
    </source>
</evidence>
<keyword id="KW-0004">4Fe-4S</keyword>
<keyword id="KW-0408">Iron</keyword>
<keyword id="KW-0411">Iron-sulfur</keyword>
<keyword id="KW-0479">Metal-binding</keyword>
<keyword id="KW-0496">Mitochondrion</keyword>
<keyword id="KW-0949">S-adenosyl-L-methionine</keyword>
<keyword id="KW-0808">Transferase</keyword>
<keyword id="KW-0809">Transit peptide</keyword>
<proteinExistence type="inferred from homology"/>
<reference key="1">
    <citation type="journal article" date="2009" name="Genome Res.">
        <title>Genome structure of a Saccharomyces cerevisiae strain widely used in bioethanol production.</title>
        <authorList>
            <person name="Argueso J.L."/>
            <person name="Carazzolle M.F."/>
            <person name="Mieczkowski P.A."/>
            <person name="Duarte F.M."/>
            <person name="Netto O.V.C."/>
            <person name="Missawa S.K."/>
            <person name="Galzerani F."/>
            <person name="Costa G.G.L."/>
            <person name="Vidal R.O."/>
            <person name="Noronha M.F."/>
            <person name="Dominska M."/>
            <person name="Andrietta M.G.S."/>
            <person name="Andrietta S.R."/>
            <person name="Cunha A.F."/>
            <person name="Gomes L.H."/>
            <person name="Tavares F.C.A."/>
            <person name="Alcarde A.R."/>
            <person name="Dietrich F.S."/>
            <person name="McCusker J.H."/>
            <person name="Petes T.D."/>
            <person name="Pereira G.A.G."/>
        </authorList>
    </citation>
    <scope>NUCLEOTIDE SEQUENCE [LARGE SCALE GENOMIC DNA]</scope>
    <source>
        <strain>JAY291</strain>
    </source>
</reference>
<sequence>MYRRSVGVLFVGRNTRWISSTIRCGTSATRPIRSNALNTDSDNASVRVPVGNSTEVENATSQLTGTSGKRRKGNRKRITEFKDALNLGPSFADFVSGKASKMILDPLEKARQNTEEAKKLPRWLKVPIPKGTNYHKLKGDVKELGLSTVCEEARCPNIGECWGGKDKSKATATIMLLGDTCTRGCRFCSVKTNRTPSKPDPMEPENTAEAIKRWGLGYVVLTTVDRDDLVDGGANHLAETVRKIKQKAPNTLVETLSGDFRGDLKMVDIMAQCGLDVYAHNLETVESLTPHVRDRRATYRQSLSVLERAKATVPSLITKTSIMLGLGETDEQITQTLKDLRNIQCDVVTFGQYMRPTKRHMKVVEYVKPEKFDYWKERALEMGFLYCASGPLVRSSYKAGEAFIENVLKKRNMK</sequence>
<dbReference type="EC" id="2.8.1.8" evidence="1"/>
<dbReference type="EMBL" id="ACFL01000381">
    <property type="protein sequence ID" value="EEU04876.1"/>
    <property type="molecule type" value="Genomic_DNA"/>
</dbReference>
<dbReference type="SMR" id="C7GWI3"/>
<dbReference type="UniPathway" id="UPA00538">
    <property type="reaction ID" value="UER00593"/>
</dbReference>
<dbReference type="Proteomes" id="UP000008073">
    <property type="component" value="Unassembled WGS sequence"/>
</dbReference>
<dbReference type="GO" id="GO:0005739">
    <property type="term" value="C:mitochondrion"/>
    <property type="evidence" value="ECO:0007669"/>
    <property type="project" value="UniProtKB-SubCell"/>
</dbReference>
<dbReference type="GO" id="GO:0051539">
    <property type="term" value="F:4 iron, 4 sulfur cluster binding"/>
    <property type="evidence" value="ECO:0007669"/>
    <property type="project" value="UniProtKB-UniRule"/>
</dbReference>
<dbReference type="GO" id="GO:0016992">
    <property type="term" value="F:lipoate synthase activity"/>
    <property type="evidence" value="ECO:0007669"/>
    <property type="project" value="UniProtKB-UniRule"/>
</dbReference>
<dbReference type="GO" id="GO:0046872">
    <property type="term" value="F:metal ion binding"/>
    <property type="evidence" value="ECO:0007669"/>
    <property type="project" value="UniProtKB-KW"/>
</dbReference>
<dbReference type="CDD" id="cd01335">
    <property type="entry name" value="Radical_SAM"/>
    <property type="match status" value="1"/>
</dbReference>
<dbReference type="FunFam" id="3.20.20.70:FF:000036">
    <property type="entry name" value="Lipoyl synthase, mitochondrial"/>
    <property type="match status" value="1"/>
</dbReference>
<dbReference type="Gene3D" id="3.20.20.70">
    <property type="entry name" value="Aldolase class I"/>
    <property type="match status" value="1"/>
</dbReference>
<dbReference type="HAMAP" id="MF_00206">
    <property type="entry name" value="Lipoyl_synth"/>
    <property type="match status" value="1"/>
</dbReference>
<dbReference type="InterPro" id="IPR013785">
    <property type="entry name" value="Aldolase_TIM"/>
</dbReference>
<dbReference type="InterPro" id="IPR006638">
    <property type="entry name" value="Elp3/MiaA/NifB-like_rSAM"/>
</dbReference>
<dbReference type="InterPro" id="IPR031691">
    <property type="entry name" value="LIAS_N"/>
</dbReference>
<dbReference type="InterPro" id="IPR003698">
    <property type="entry name" value="Lipoyl_synth"/>
</dbReference>
<dbReference type="InterPro" id="IPR007197">
    <property type="entry name" value="rSAM"/>
</dbReference>
<dbReference type="NCBIfam" id="TIGR00510">
    <property type="entry name" value="lipA"/>
    <property type="match status" value="1"/>
</dbReference>
<dbReference type="NCBIfam" id="NF004019">
    <property type="entry name" value="PRK05481.1"/>
    <property type="match status" value="1"/>
</dbReference>
<dbReference type="NCBIfam" id="NF009544">
    <property type="entry name" value="PRK12928.1"/>
    <property type="match status" value="1"/>
</dbReference>
<dbReference type="PANTHER" id="PTHR10949">
    <property type="entry name" value="LIPOYL SYNTHASE"/>
    <property type="match status" value="1"/>
</dbReference>
<dbReference type="PANTHER" id="PTHR10949:SF0">
    <property type="entry name" value="LIPOYL SYNTHASE, MITOCHONDRIAL"/>
    <property type="match status" value="1"/>
</dbReference>
<dbReference type="Pfam" id="PF16881">
    <property type="entry name" value="LIAS_N"/>
    <property type="match status" value="1"/>
</dbReference>
<dbReference type="Pfam" id="PF04055">
    <property type="entry name" value="Radical_SAM"/>
    <property type="match status" value="1"/>
</dbReference>
<dbReference type="PIRSF" id="PIRSF005963">
    <property type="entry name" value="Lipoyl_synth"/>
    <property type="match status" value="1"/>
</dbReference>
<dbReference type="SFLD" id="SFLDF00271">
    <property type="entry name" value="lipoyl_synthase"/>
    <property type="match status" value="1"/>
</dbReference>
<dbReference type="SFLD" id="SFLDG01058">
    <property type="entry name" value="lipoyl_synthase_like"/>
    <property type="match status" value="1"/>
</dbReference>
<dbReference type="SMART" id="SM00729">
    <property type="entry name" value="Elp3"/>
    <property type="match status" value="1"/>
</dbReference>
<dbReference type="SUPFAM" id="SSF102114">
    <property type="entry name" value="Radical SAM enzymes"/>
    <property type="match status" value="1"/>
</dbReference>
<dbReference type="PROSITE" id="PS51918">
    <property type="entry name" value="RADICAL_SAM"/>
    <property type="match status" value="1"/>
</dbReference>
<feature type="transit peptide" description="Mitochondrion" evidence="1">
    <location>
        <begin position="1"/>
        <end position="18"/>
    </location>
</feature>
<feature type="chain" id="PRO_0000398287" description="Lipoyl synthase, mitochondrial">
    <location>
        <begin position="19"/>
        <end position="414"/>
    </location>
</feature>
<feature type="domain" description="Radical SAM core" evidence="2">
    <location>
        <begin position="164"/>
        <end position="385"/>
    </location>
</feature>
<feature type="region of interest" description="Disordered" evidence="3">
    <location>
        <begin position="51"/>
        <end position="75"/>
    </location>
</feature>
<feature type="compositionally biased region" description="Polar residues" evidence="3">
    <location>
        <begin position="51"/>
        <end position="67"/>
    </location>
</feature>
<feature type="binding site" evidence="1">
    <location>
        <position position="150"/>
    </location>
    <ligand>
        <name>[4Fe-4S] cluster</name>
        <dbReference type="ChEBI" id="CHEBI:49883"/>
        <label>1</label>
    </ligand>
</feature>
<feature type="binding site" evidence="1">
    <location>
        <position position="155"/>
    </location>
    <ligand>
        <name>[4Fe-4S] cluster</name>
        <dbReference type="ChEBI" id="CHEBI:49883"/>
        <label>1</label>
    </ligand>
</feature>
<feature type="binding site" evidence="1">
    <location>
        <position position="161"/>
    </location>
    <ligand>
        <name>[4Fe-4S] cluster</name>
        <dbReference type="ChEBI" id="CHEBI:49883"/>
        <label>1</label>
    </ligand>
</feature>
<feature type="binding site" evidence="1">
    <location>
        <position position="181"/>
    </location>
    <ligand>
        <name>[4Fe-4S] cluster</name>
        <dbReference type="ChEBI" id="CHEBI:49883"/>
        <label>2</label>
        <note>4Fe-4S-S-AdoMet</note>
    </ligand>
</feature>
<feature type="binding site" evidence="1">
    <location>
        <position position="185"/>
    </location>
    <ligand>
        <name>[4Fe-4S] cluster</name>
        <dbReference type="ChEBI" id="CHEBI:49883"/>
        <label>2</label>
        <note>4Fe-4S-S-AdoMet</note>
    </ligand>
</feature>
<feature type="binding site" evidence="1">
    <location>
        <position position="188"/>
    </location>
    <ligand>
        <name>[4Fe-4S] cluster</name>
        <dbReference type="ChEBI" id="CHEBI:49883"/>
        <label>2</label>
        <note>4Fe-4S-S-AdoMet</note>
    </ligand>
</feature>
<feature type="binding site" evidence="1">
    <location>
        <position position="396"/>
    </location>
    <ligand>
        <name>[4Fe-4S] cluster</name>
        <dbReference type="ChEBI" id="CHEBI:49883"/>
        <label>1</label>
    </ligand>
</feature>
<comment type="function">
    <text evidence="1">Catalyzes the radical-mediated insertion of two sulfur atoms into the C-6 and C-8 positions of the octanoyl moiety bound to the lipoyl domains of lipoate-dependent enzymes, thereby converting the octanoylated domains into lipoylated derivatives.</text>
</comment>
<comment type="catalytic activity">
    <reaction evidence="1">
        <text>[[Fe-S] cluster scaffold protein carrying a second [4Fe-4S](2+) cluster] + N(6)-octanoyl-L-lysyl-[protein] + 2 oxidized [2Fe-2S]-[ferredoxin] + 2 S-adenosyl-L-methionine + 4 H(+) = [[Fe-S] cluster scaffold protein] + N(6)-[(R)-dihydrolipoyl]-L-lysyl-[protein] + 4 Fe(3+) + 2 hydrogen sulfide + 2 5'-deoxyadenosine + 2 L-methionine + 2 reduced [2Fe-2S]-[ferredoxin]</text>
        <dbReference type="Rhea" id="RHEA:16585"/>
        <dbReference type="Rhea" id="RHEA-COMP:9928"/>
        <dbReference type="Rhea" id="RHEA-COMP:10000"/>
        <dbReference type="Rhea" id="RHEA-COMP:10001"/>
        <dbReference type="Rhea" id="RHEA-COMP:10475"/>
        <dbReference type="Rhea" id="RHEA-COMP:14568"/>
        <dbReference type="Rhea" id="RHEA-COMP:14569"/>
        <dbReference type="ChEBI" id="CHEBI:15378"/>
        <dbReference type="ChEBI" id="CHEBI:17319"/>
        <dbReference type="ChEBI" id="CHEBI:29034"/>
        <dbReference type="ChEBI" id="CHEBI:29919"/>
        <dbReference type="ChEBI" id="CHEBI:33722"/>
        <dbReference type="ChEBI" id="CHEBI:33737"/>
        <dbReference type="ChEBI" id="CHEBI:33738"/>
        <dbReference type="ChEBI" id="CHEBI:57844"/>
        <dbReference type="ChEBI" id="CHEBI:59789"/>
        <dbReference type="ChEBI" id="CHEBI:78809"/>
        <dbReference type="ChEBI" id="CHEBI:83100"/>
        <dbReference type="EC" id="2.8.1.8"/>
    </reaction>
</comment>
<comment type="cofactor">
    <cofactor evidence="1">
        <name>[4Fe-4S] cluster</name>
        <dbReference type="ChEBI" id="CHEBI:49883"/>
    </cofactor>
    <text evidence="1">Binds 2 [4Fe-4S] clusters per subunit. One cluster is coordinated with 3 cysteines and an exchangeable S-adenosyl-L-methionine.</text>
</comment>
<comment type="pathway">
    <text evidence="1">Protein modification; protein lipoylation via endogenous pathway; protein N(6)-(lipoyl)lysine from octanoyl-[acyl-carrier-protein]: step 2/2.</text>
</comment>
<comment type="subcellular location">
    <subcellularLocation>
        <location evidence="1">Mitochondrion</location>
    </subcellularLocation>
</comment>
<comment type="similarity">
    <text evidence="1">Belongs to the radical SAM superfamily. Lipoyl synthase family.</text>
</comment>
<gene>
    <name evidence="1" type="primary">LIP5</name>
    <name type="ORF">C1Q_04824</name>
</gene>
<organism>
    <name type="scientific">Saccharomyces cerevisiae (strain JAY291)</name>
    <name type="common">Baker's yeast</name>
    <dbReference type="NCBI Taxonomy" id="574961"/>
    <lineage>
        <taxon>Eukaryota</taxon>
        <taxon>Fungi</taxon>
        <taxon>Dikarya</taxon>
        <taxon>Ascomycota</taxon>
        <taxon>Saccharomycotina</taxon>
        <taxon>Saccharomycetes</taxon>
        <taxon>Saccharomycetales</taxon>
        <taxon>Saccharomycetaceae</taxon>
        <taxon>Saccharomyces</taxon>
    </lineage>
</organism>
<accession>C7GWI3</accession>
<protein>
    <recommendedName>
        <fullName evidence="1">Lipoyl synthase, mitochondrial</fullName>
        <ecNumber evidence="1">2.8.1.8</ecNumber>
    </recommendedName>
    <alternativeName>
        <fullName evidence="1">Lipoate synthase</fullName>
        <shortName evidence="1">LS</shortName>
        <shortName evidence="1">Lip-syn</shortName>
    </alternativeName>
    <alternativeName>
        <fullName evidence="1">Lipoic acid synthase</fullName>
    </alternativeName>
</protein>
<name>LIPA_YEAS2</name>